<sequence length="427" mass="46066">MESLTLQPIARVDGTINLPGSKSVSNRALLLAALAHGKTVLTNLLDSDDVRHMLNALAALGVSYTLSADRTRCEIIGNGGPLHAEGALELFLGNAGTAMRPLAAALCLGSNDIVLTGEPRMKERPIGHLVDALRLGGAKITYLEQENYPPLRLQGGFTGGNVEVDGSVSSQFLTALLMTAPLAPEDTVIRIKGDLVSKPYIDITLNLMKTFGVEIENQHYQQFVVKGGQSYQSPGTYLVEGDASSASYFLAAAAIKGGTVKVTGIGRNSMQGDIRFADVLEKMGATICWGDDYISCTRGELNAIDMDMNHIPDAAMTIATAALFAKGTTTLRNIYNWRVKETDRLFAMATELRKVGAEVEEGHDYIRITPPEKLNFAEIATYNDHRMAMCFSLVALSDTAVTILDPKCTAKTFPDYFEQLARISQPG</sequence>
<reference key="1">
    <citation type="journal article" date="2009" name="PLoS Genet.">
        <title>Organised genome dynamics in the Escherichia coli species results in highly diverse adaptive paths.</title>
        <authorList>
            <person name="Touchon M."/>
            <person name="Hoede C."/>
            <person name="Tenaillon O."/>
            <person name="Barbe V."/>
            <person name="Baeriswyl S."/>
            <person name="Bidet P."/>
            <person name="Bingen E."/>
            <person name="Bonacorsi S."/>
            <person name="Bouchier C."/>
            <person name="Bouvet O."/>
            <person name="Calteau A."/>
            <person name="Chiapello H."/>
            <person name="Clermont O."/>
            <person name="Cruveiller S."/>
            <person name="Danchin A."/>
            <person name="Diard M."/>
            <person name="Dossat C."/>
            <person name="Karoui M.E."/>
            <person name="Frapy E."/>
            <person name="Garry L."/>
            <person name="Ghigo J.M."/>
            <person name="Gilles A.M."/>
            <person name="Johnson J."/>
            <person name="Le Bouguenec C."/>
            <person name="Lescat M."/>
            <person name="Mangenot S."/>
            <person name="Martinez-Jehanne V."/>
            <person name="Matic I."/>
            <person name="Nassif X."/>
            <person name="Oztas S."/>
            <person name="Petit M.A."/>
            <person name="Pichon C."/>
            <person name="Rouy Z."/>
            <person name="Ruf C.S."/>
            <person name="Schneider D."/>
            <person name="Tourret J."/>
            <person name="Vacherie B."/>
            <person name="Vallenet D."/>
            <person name="Medigue C."/>
            <person name="Rocha E.P.C."/>
            <person name="Denamur E."/>
        </authorList>
    </citation>
    <scope>NUCLEOTIDE SEQUENCE [LARGE SCALE GENOMIC DNA]</scope>
    <source>
        <strain>UMN026 / ExPEC</strain>
    </source>
</reference>
<gene>
    <name evidence="1" type="primary">aroA</name>
    <name type="ordered locus">ECUMN_1101</name>
</gene>
<evidence type="ECO:0000255" key="1">
    <source>
        <dbReference type="HAMAP-Rule" id="MF_00210"/>
    </source>
</evidence>
<name>AROA_ECOLU</name>
<keyword id="KW-0028">Amino-acid biosynthesis</keyword>
<keyword id="KW-0057">Aromatic amino acid biosynthesis</keyword>
<keyword id="KW-0963">Cytoplasm</keyword>
<keyword id="KW-0808">Transferase</keyword>
<feature type="chain" id="PRO_1000118784" description="3-phosphoshikimate 1-carboxyvinyltransferase">
    <location>
        <begin position="1"/>
        <end position="427"/>
    </location>
</feature>
<feature type="active site" description="Proton acceptor" evidence="1">
    <location>
        <position position="313"/>
    </location>
</feature>
<feature type="binding site" evidence="1">
    <location>
        <position position="22"/>
    </location>
    <ligand>
        <name>3-phosphoshikimate</name>
        <dbReference type="ChEBI" id="CHEBI:145989"/>
    </ligand>
</feature>
<feature type="binding site" evidence="1">
    <location>
        <position position="22"/>
    </location>
    <ligand>
        <name>phosphoenolpyruvate</name>
        <dbReference type="ChEBI" id="CHEBI:58702"/>
    </ligand>
</feature>
<feature type="binding site" evidence="1">
    <location>
        <position position="23"/>
    </location>
    <ligand>
        <name>3-phosphoshikimate</name>
        <dbReference type="ChEBI" id="CHEBI:145989"/>
    </ligand>
</feature>
<feature type="binding site" evidence="1">
    <location>
        <position position="27"/>
    </location>
    <ligand>
        <name>3-phosphoshikimate</name>
        <dbReference type="ChEBI" id="CHEBI:145989"/>
    </ligand>
</feature>
<feature type="binding site" evidence="1">
    <location>
        <position position="96"/>
    </location>
    <ligand>
        <name>phosphoenolpyruvate</name>
        <dbReference type="ChEBI" id="CHEBI:58702"/>
    </ligand>
</feature>
<feature type="binding site" evidence="1">
    <location>
        <position position="124"/>
    </location>
    <ligand>
        <name>phosphoenolpyruvate</name>
        <dbReference type="ChEBI" id="CHEBI:58702"/>
    </ligand>
</feature>
<feature type="binding site" evidence="1">
    <location>
        <position position="169"/>
    </location>
    <ligand>
        <name>3-phosphoshikimate</name>
        <dbReference type="ChEBI" id="CHEBI:145989"/>
    </ligand>
</feature>
<feature type="binding site" evidence="1">
    <location>
        <position position="170"/>
    </location>
    <ligand>
        <name>3-phosphoshikimate</name>
        <dbReference type="ChEBI" id="CHEBI:145989"/>
    </ligand>
</feature>
<feature type="binding site" evidence="1">
    <location>
        <position position="171"/>
    </location>
    <ligand>
        <name>3-phosphoshikimate</name>
        <dbReference type="ChEBI" id="CHEBI:145989"/>
    </ligand>
</feature>
<feature type="binding site" evidence="1">
    <location>
        <position position="171"/>
    </location>
    <ligand>
        <name>phosphoenolpyruvate</name>
        <dbReference type="ChEBI" id="CHEBI:58702"/>
    </ligand>
</feature>
<feature type="binding site" evidence="1">
    <location>
        <position position="197"/>
    </location>
    <ligand>
        <name>3-phosphoshikimate</name>
        <dbReference type="ChEBI" id="CHEBI:145989"/>
    </ligand>
</feature>
<feature type="binding site" evidence="1">
    <location>
        <position position="313"/>
    </location>
    <ligand>
        <name>3-phosphoshikimate</name>
        <dbReference type="ChEBI" id="CHEBI:145989"/>
    </ligand>
</feature>
<feature type="binding site" evidence="1">
    <location>
        <position position="336"/>
    </location>
    <ligand>
        <name>3-phosphoshikimate</name>
        <dbReference type="ChEBI" id="CHEBI:145989"/>
    </ligand>
</feature>
<feature type="binding site" evidence="1">
    <location>
        <position position="340"/>
    </location>
    <ligand>
        <name>3-phosphoshikimate</name>
        <dbReference type="ChEBI" id="CHEBI:145989"/>
    </ligand>
</feature>
<feature type="binding site" evidence="1">
    <location>
        <position position="344"/>
    </location>
    <ligand>
        <name>phosphoenolpyruvate</name>
        <dbReference type="ChEBI" id="CHEBI:58702"/>
    </ligand>
</feature>
<feature type="binding site" evidence="1">
    <location>
        <position position="386"/>
    </location>
    <ligand>
        <name>phosphoenolpyruvate</name>
        <dbReference type="ChEBI" id="CHEBI:58702"/>
    </ligand>
</feature>
<feature type="binding site" evidence="1">
    <location>
        <position position="411"/>
    </location>
    <ligand>
        <name>phosphoenolpyruvate</name>
        <dbReference type="ChEBI" id="CHEBI:58702"/>
    </ligand>
</feature>
<proteinExistence type="inferred from homology"/>
<dbReference type="EC" id="2.5.1.19" evidence="1"/>
<dbReference type="EMBL" id="CU928163">
    <property type="protein sequence ID" value="CAR12310.1"/>
    <property type="molecule type" value="Genomic_DNA"/>
</dbReference>
<dbReference type="RefSeq" id="WP_000445212.1">
    <property type="nucleotide sequence ID" value="NC_011751.1"/>
</dbReference>
<dbReference type="RefSeq" id="YP_002411854.1">
    <property type="nucleotide sequence ID" value="NC_011751.1"/>
</dbReference>
<dbReference type="SMR" id="B7NAQ7"/>
<dbReference type="STRING" id="585056.ECUMN_1101"/>
<dbReference type="KEGG" id="eum:ECUMN_1101"/>
<dbReference type="PATRIC" id="fig|585056.7.peg.1296"/>
<dbReference type="HOGENOM" id="CLU_024321_0_0_6"/>
<dbReference type="UniPathway" id="UPA00053">
    <property type="reaction ID" value="UER00089"/>
</dbReference>
<dbReference type="Proteomes" id="UP000007097">
    <property type="component" value="Chromosome"/>
</dbReference>
<dbReference type="GO" id="GO:0005737">
    <property type="term" value="C:cytoplasm"/>
    <property type="evidence" value="ECO:0007669"/>
    <property type="project" value="UniProtKB-SubCell"/>
</dbReference>
<dbReference type="GO" id="GO:0003866">
    <property type="term" value="F:3-phosphoshikimate 1-carboxyvinyltransferase activity"/>
    <property type="evidence" value="ECO:0007669"/>
    <property type="project" value="UniProtKB-UniRule"/>
</dbReference>
<dbReference type="GO" id="GO:0008652">
    <property type="term" value="P:amino acid biosynthetic process"/>
    <property type="evidence" value="ECO:0007669"/>
    <property type="project" value="UniProtKB-KW"/>
</dbReference>
<dbReference type="GO" id="GO:0009073">
    <property type="term" value="P:aromatic amino acid family biosynthetic process"/>
    <property type="evidence" value="ECO:0007669"/>
    <property type="project" value="UniProtKB-KW"/>
</dbReference>
<dbReference type="GO" id="GO:0009423">
    <property type="term" value="P:chorismate biosynthetic process"/>
    <property type="evidence" value="ECO:0007669"/>
    <property type="project" value="UniProtKB-UniRule"/>
</dbReference>
<dbReference type="CDD" id="cd01554">
    <property type="entry name" value="EPT-like"/>
    <property type="match status" value="1"/>
</dbReference>
<dbReference type="FunFam" id="3.65.10.10:FF:000003">
    <property type="entry name" value="3-phosphoshikimate 1-carboxyvinyltransferase"/>
    <property type="match status" value="1"/>
</dbReference>
<dbReference type="FunFam" id="3.65.10.10:FF:000004">
    <property type="entry name" value="3-phosphoshikimate 1-carboxyvinyltransferase"/>
    <property type="match status" value="1"/>
</dbReference>
<dbReference type="Gene3D" id="3.65.10.10">
    <property type="entry name" value="Enolpyruvate transferase domain"/>
    <property type="match status" value="2"/>
</dbReference>
<dbReference type="HAMAP" id="MF_00210">
    <property type="entry name" value="EPSP_synth"/>
    <property type="match status" value="1"/>
</dbReference>
<dbReference type="InterPro" id="IPR001986">
    <property type="entry name" value="Enolpyruvate_Tfrase_dom"/>
</dbReference>
<dbReference type="InterPro" id="IPR036968">
    <property type="entry name" value="Enolpyruvate_Tfrase_sf"/>
</dbReference>
<dbReference type="InterPro" id="IPR006264">
    <property type="entry name" value="EPSP_synthase"/>
</dbReference>
<dbReference type="InterPro" id="IPR023193">
    <property type="entry name" value="EPSP_synthase_CS"/>
</dbReference>
<dbReference type="InterPro" id="IPR013792">
    <property type="entry name" value="RNA3'P_cycl/enolpyr_Trfase_a/b"/>
</dbReference>
<dbReference type="NCBIfam" id="TIGR01356">
    <property type="entry name" value="aroA"/>
    <property type="match status" value="1"/>
</dbReference>
<dbReference type="PANTHER" id="PTHR21090">
    <property type="entry name" value="AROM/DEHYDROQUINATE SYNTHASE"/>
    <property type="match status" value="1"/>
</dbReference>
<dbReference type="PANTHER" id="PTHR21090:SF5">
    <property type="entry name" value="PENTAFUNCTIONAL AROM POLYPEPTIDE"/>
    <property type="match status" value="1"/>
</dbReference>
<dbReference type="Pfam" id="PF00275">
    <property type="entry name" value="EPSP_synthase"/>
    <property type="match status" value="1"/>
</dbReference>
<dbReference type="PIRSF" id="PIRSF000505">
    <property type="entry name" value="EPSPS"/>
    <property type="match status" value="1"/>
</dbReference>
<dbReference type="SUPFAM" id="SSF55205">
    <property type="entry name" value="EPT/RTPC-like"/>
    <property type="match status" value="1"/>
</dbReference>
<dbReference type="PROSITE" id="PS00104">
    <property type="entry name" value="EPSP_SYNTHASE_1"/>
    <property type="match status" value="1"/>
</dbReference>
<dbReference type="PROSITE" id="PS00885">
    <property type="entry name" value="EPSP_SYNTHASE_2"/>
    <property type="match status" value="1"/>
</dbReference>
<protein>
    <recommendedName>
        <fullName evidence="1">3-phosphoshikimate 1-carboxyvinyltransferase</fullName>
        <ecNumber evidence="1">2.5.1.19</ecNumber>
    </recommendedName>
    <alternativeName>
        <fullName evidence="1">5-enolpyruvylshikimate-3-phosphate synthase</fullName>
        <shortName evidence="1">EPSP synthase</shortName>
        <shortName evidence="1">EPSPS</shortName>
    </alternativeName>
</protein>
<accession>B7NAQ7</accession>
<organism>
    <name type="scientific">Escherichia coli O17:K52:H18 (strain UMN026 / ExPEC)</name>
    <dbReference type="NCBI Taxonomy" id="585056"/>
    <lineage>
        <taxon>Bacteria</taxon>
        <taxon>Pseudomonadati</taxon>
        <taxon>Pseudomonadota</taxon>
        <taxon>Gammaproteobacteria</taxon>
        <taxon>Enterobacterales</taxon>
        <taxon>Enterobacteriaceae</taxon>
        <taxon>Escherichia</taxon>
    </lineage>
</organism>
<comment type="function">
    <text evidence="1">Catalyzes the transfer of the enolpyruvyl moiety of phosphoenolpyruvate (PEP) to the 5-hydroxyl of shikimate-3-phosphate (S3P) to produce enolpyruvyl shikimate-3-phosphate and inorganic phosphate.</text>
</comment>
<comment type="catalytic activity">
    <reaction evidence="1">
        <text>3-phosphoshikimate + phosphoenolpyruvate = 5-O-(1-carboxyvinyl)-3-phosphoshikimate + phosphate</text>
        <dbReference type="Rhea" id="RHEA:21256"/>
        <dbReference type="ChEBI" id="CHEBI:43474"/>
        <dbReference type="ChEBI" id="CHEBI:57701"/>
        <dbReference type="ChEBI" id="CHEBI:58702"/>
        <dbReference type="ChEBI" id="CHEBI:145989"/>
        <dbReference type="EC" id="2.5.1.19"/>
    </reaction>
    <physiologicalReaction direction="left-to-right" evidence="1">
        <dbReference type="Rhea" id="RHEA:21257"/>
    </physiologicalReaction>
</comment>
<comment type="pathway">
    <text evidence="1">Metabolic intermediate biosynthesis; chorismate biosynthesis; chorismate from D-erythrose 4-phosphate and phosphoenolpyruvate: step 6/7.</text>
</comment>
<comment type="subunit">
    <text evidence="1">Monomer.</text>
</comment>
<comment type="subcellular location">
    <subcellularLocation>
        <location evidence="1">Cytoplasm</location>
    </subcellularLocation>
</comment>
<comment type="similarity">
    <text evidence="1">Belongs to the EPSP synthase family.</text>
</comment>